<comment type="function">
    <text evidence="1">Proton-coupled transporter that transports a wide spectrum of oxo derivatives of heterocyclic nitrogen compounds.</text>
</comment>
<comment type="subcellular location">
    <subcellularLocation>
        <location evidence="2">Membrane</location>
        <topology evidence="2">Multi-pass membrane protein</topology>
    </subcellularLocation>
</comment>
<comment type="alternative products">
    <event type="alternative splicing"/>
    <isoform>
        <id>Q9ZQ88-1</id>
        <name>1</name>
        <sequence type="displayed"/>
    </isoform>
    <isoform>
        <id>Q9ZQ88-2</id>
        <name>2</name>
        <sequence type="described" ref="VSP_014325 VSP_014326"/>
    </isoform>
    <isoform>
        <id>Q9ZQ88-3</id>
        <name>3</name>
        <sequence type="described" ref="VSP_014323 VSP_014324"/>
    </isoform>
    <isoform>
        <id>Q9ZQ88-4</id>
        <name>4</name>
        <sequence type="described" ref="VSP_014322 VSP_014323 VSP_014324"/>
    </isoform>
</comment>
<comment type="tissue specificity">
    <text evidence="3">Expressed in developing seedlings, flower filaments and stigma, and the top and bottom parts of carpels in siliques.</text>
</comment>
<comment type="similarity">
    <text evidence="7">Belongs to the plant ureide permease (TC 2.A.7.19) family.</text>
</comment>
<comment type="sequence caution" evidence="7">
    <conflict type="erroneous initiation">
        <sequence resource="EMBL-CDS" id="AAD17425"/>
    </conflict>
    <text>Truncated N-terminus.</text>
</comment>
<comment type="sequence caution" evidence="7">
    <conflict type="erroneous initiation">
        <sequence resource="EMBL-CDS" id="AAT68347"/>
    </conflict>
    <text>Truncated N-terminus.</text>
</comment>
<dbReference type="EMBL" id="AC006284">
    <property type="protein sequence ID" value="AAD17425.1"/>
    <property type="status" value="ALT_INIT"/>
    <property type="molecule type" value="Genomic_DNA"/>
</dbReference>
<dbReference type="EMBL" id="CP002685">
    <property type="protein sequence ID" value="AEC05710.1"/>
    <property type="molecule type" value="Genomic_DNA"/>
</dbReference>
<dbReference type="EMBL" id="AY600550">
    <property type="protein sequence ID" value="AAT68349.1"/>
    <property type="molecule type" value="mRNA"/>
</dbReference>
<dbReference type="EMBL" id="AY600549">
    <property type="protein sequence ID" value="AAT68348.1"/>
    <property type="molecule type" value="mRNA"/>
</dbReference>
<dbReference type="EMBL" id="AY600548">
    <property type="protein sequence ID" value="AAT68347.1"/>
    <property type="status" value="ALT_INIT"/>
    <property type="molecule type" value="mRNA"/>
</dbReference>
<dbReference type="EMBL" id="DQ446462">
    <property type="protein sequence ID" value="ABE65798.1"/>
    <property type="molecule type" value="mRNA"/>
</dbReference>
<dbReference type="PIR" id="D84449">
    <property type="entry name" value="D84449"/>
</dbReference>
<dbReference type="RefSeq" id="NP_178450.2">
    <molecule id="Q9ZQ88-1"/>
    <property type="nucleotide sequence ID" value="NM_126402.3"/>
</dbReference>
<dbReference type="STRING" id="3702.Q9ZQ88"/>
<dbReference type="PaxDb" id="3702-AT2G03520.1"/>
<dbReference type="ProteomicsDB" id="228564">
    <molecule id="Q9ZQ88-1"/>
</dbReference>
<dbReference type="EnsemblPlants" id="AT2G03520.1">
    <molecule id="Q9ZQ88-1"/>
    <property type="protein sequence ID" value="AT2G03520.1"/>
    <property type="gene ID" value="AT2G03520"/>
</dbReference>
<dbReference type="GeneID" id="814881"/>
<dbReference type="Gramene" id="AT2G03520.1">
    <molecule id="Q9ZQ88-1"/>
    <property type="protein sequence ID" value="AT2G03520.1"/>
    <property type="gene ID" value="AT2G03520"/>
</dbReference>
<dbReference type="KEGG" id="ath:AT2G03520"/>
<dbReference type="Araport" id="AT2G03520"/>
<dbReference type="TAIR" id="AT2G03520">
    <property type="gene designation" value="UPS4"/>
</dbReference>
<dbReference type="eggNOG" id="ENOG502QUAA">
    <property type="taxonomic scope" value="Eukaryota"/>
</dbReference>
<dbReference type="HOGENOM" id="CLU_051261_0_0_1"/>
<dbReference type="InParanoid" id="Q9ZQ88"/>
<dbReference type="OMA" id="MIGLCIC"/>
<dbReference type="PhylomeDB" id="Q9ZQ88"/>
<dbReference type="PRO" id="PR:Q9ZQ88"/>
<dbReference type="Proteomes" id="UP000006548">
    <property type="component" value="Chromosome 2"/>
</dbReference>
<dbReference type="ExpressionAtlas" id="Q9ZQ88">
    <property type="expression patterns" value="baseline and differential"/>
</dbReference>
<dbReference type="GO" id="GO:0016020">
    <property type="term" value="C:membrane"/>
    <property type="evidence" value="ECO:0007669"/>
    <property type="project" value="UniProtKB-SubCell"/>
</dbReference>
<dbReference type="GO" id="GO:0005524">
    <property type="term" value="F:ATP binding"/>
    <property type="evidence" value="ECO:0007669"/>
    <property type="project" value="UniProtKB-KW"/>
</dbReference>
<dbReference type="GO" id="GO:0022857">
    <property type="term" value="F:transmembrane transporter activity"/>
    <property type="evidence" value="ECO:0007669"/>
    <property type="project" value="InterPro"/>
</dbReference>
<dbReference type="InterPro" id="IPR030189">
    <property type="entry name" value="UPS_plant"/>
</dbReference>
<dbReference type="InterPro" id="IPR009834">
    <property type="entry name" value="Ureide_permease"/>
</dbReference>
<dbReference type="PANTHER" id="PTHR31081">
    <property type="entry name" value="UREIDE PERMEASE 1-RELATED-RELATED"/>
    <property type="match status" value="1"/>
</dbReference>
<dbReference type="PANTHER" id="PTHR31081:SF13">
    <property type="entry name" value="UREIDE PERMEASE 4"/>
    <property type="match status" value="1"/>
</dbReference>
<dbReference type="Pfam" id="PF07168">
    <property type="entry name" value="Ureide_permease"/>
    <property type="match status" value="1"/>
</dbReference>
<accession>Q9ZQ88</accession>
<accession>Q1PFA1</accession>
<accession>Q6E273</accession>
<accession>Q6E274</accession>
<accession>Q6E275</accession>
<reference key="1">
    <citation type="journal article" date="1999" name="Nature">
        <title>Sequence and analysis of chromosome 2 of the plant Arabidopsis thaliana.</title>
        <authorList>
            <person name="Lin X."/>
            <person name="Kaul S."/>
            <person name="Rounsley S.D."/>
            <person name="Shea T.P."/>
            <person name="Benito M.-I."/>
            <person name="Town C.D."/>
            <person name="Fujii C.Y."/>
            <person name="Mason T.M."/>
            <person name="Bowman C.L."/>
            <person name="Barnstead M.E."/>
            <person name="Feldblyum T.V."/>
            <person name="Buell C.R."/>
            <person name="Ketchum K.A."/>
            <person name="Lee J.J."/>
            <person name="Ronning C.M."/>
            <person name="Koo H.L."/>
            <person name="Moffat K.S."/>
            <person name="Cronin L.A."/>
            <person name="Shen M."/>
            <person name="Pai G."/>
            <person name="Van Aken S."/>
            <person name="Umayam L."/>
            <person name="Tallon L.J."/>
            <person name="Gill J.E."/>
            <person name="Adams M.D."/>
            <person name="Carrera A.J."/>
            <person name="Creasy T.H."/>
            <person name="Goodman H.M."/>
            <person name="Somerville C.R."/>
            <person name="Copenhaver G.P."/>
            <person name="Preuss D."/>
            <person name="Nierman W.C."/>
            <person name="White O."/>
            <person name="Eisen J.A."/>
            <person name="Salzberg S.L."/>
            <person name="Fraser C.M."/>
            <person name="Venter J.C."/>
        </authorList>
    </citation>
    <scope>NUCLEOTIDE SEQUENCE [LARGE SCALE GENOMIC DNA]</scope>
    <source>
        <strain>cv. Columbia</strain>
    </source>
</reference>
<reference key="2">
    <citation type="journal article" date="2017" name="Plant J.">
        <title>Araport11: a complete reannotation of the Arabidopsis thaliana reference genome.</title>
        <authorList>
            <person name="Cheng C.Y."/>
            <person name="Krishnakumar V."/>
            <person name="Chan A.P."/>
            <person name="Thibaud-Nissen F."/>
            <person name="Schobel S."/>
            <person name="Town C.D."/>
        </authorList>
    </citation>
    <scope>GENOME REANNOTATION</scope>
    <source>
        <strain>cv. Columbia</strain>
    </source>
</reference>
<reference key="3">
    <citation type="submission" date="2004-04" db="EMBL/GenBank/DDBJ databases">
        <title>Reconstruction of cDNA sequences for hypothetical genes in Arabidopsis thaliana from 5' and 3' RACE products.</title>
        <authorList>
            <person name="Xiao Y.-L."/>
            <person name="Underwood B.A."/>
            <person name="Moskal W.A. Jr."/>
            <person name="Torian U."/>
            <person name="Redman J.C."/>
            <person name="Wu H.C."/>
            <person name="Utterback T."/>
            <person name="Town C.D."/>
        </authorList>
    </citation>
    <scope>NUCLEOTIDE SEQUENCE [LARGE SCALE MRNA] (ISOFORMS 2; 3 AND 4)</scope>
    <source>
        <strain>cv. Columbia</strain>
    </source>
</reference>
<reference key="4">
    <citation type="journal article" date="2006" name="Plant Biotechnol. J.">
        <title>Simultaneous high-throughput recombinational cloning of open reading frames in closed and open configurations.</title>
        <authorList>
            <person name="Underwood B.A."/>
            <person name="Vanderhaeghen R."/>
            <person name="Whitford R."/>
            <person name="Town C.D."/>
            <person name="Hilson P."/>
        </authorList>
    </citation>
    <scope>NUCLEOTIDE SEQUENCE [LARGE SCALE MRNA] (ISOFORM 3)</scope>
    <source>
        <strain>cv. Columbia</strain>
    </source>
</reference>
<reference key="5">
    <citation type="journal article" date="2002" name="Plant Cell">
        <title>A novel superfamily of transporters for allantoin and other oxo derivatives of nitrogen heterocyclic compounds in Arabidopsis.</title>
        <authorList>
            <person name="Desimone M."/>
            <person name="Catoni E."/>
            <person name="Ludewig U."/>
            <person name="Hilpert M."/>
            <person name="Schneider A."/>
            <person name="Kunze R."/>
            <person name="Tegeder M."/>
            <person name="Frommer W.B."/>
            <person name="Schumacher K."/>
        </authorList>
    </citation>
    <scope>GENE FAMILY</scope>
    <scope>NOMENCLATURE</scope>
</reference>
<reference key="6">
    <citation type="journal article" date="2006" name="Planta">
        <title>Comparative studies on Ureide Permeases in Arabidopsis thaliana and analysis of two alternative splice variants of AtUPS5.</title>
        <authorList>
            <person name="Schmidt A."/>
            <person name="Baumann N."/>
            <person name="Schwarzkopf A."/>
            <person name="Frommer W.B."/>
            <person name="Desimone M."/>
        </authorList>
    </citation>
    <scope>TISSUE SPECIFICITY</scope>
</reference>
<evidence type="ECO:0000250" key="1">
    <source>
        <dbReference type="UniProtKB" id="Q9ZPR7"/>
    </source>
</evidence>
<evidence type="ECO:0000255" key="2"/>
<evidence type="ECO:0000269" key="3">
    <source>
    </source>
</evidence>
<evidence type="ECO:0000303" key="4">
    <source>
    </source>
</evidence>
<evidence type="ECO:0000303" key="5">
    <source>
    </source>
</evidence>
<evidence type="ECO:0000303" key="6">
    <source ref="3"/>
</evidence>
<evidence type="ECO:0000305" key="7"/>
<evidence type="ECO:0000312" key="8">
    <source>
        <dbReference type="Araport" id="AT2G03520"/>
    </source>
</evidence>
<evidence type="ECO:0000312" key="9">
    <source>
        <dbReference type="EMBL" id="AAD17425.1"/>
    </source>
</evidence>
<protein>
    <recommendedName>
        <fullName evidence="4">Ureide permease 4</fullName>
        <shortName evidence="4">AtUPS4</shortName>
    </recommendedName>
</protein>
<organism>
    <name type="scientific">Arabidopsis thaliana</name>
    <name type="common">Mouse-ear cress</name>
    <dbReference type="NCBI Taxonomy" id="3702"/>
    <lineage>
        <taxon>Eukaryota</taxon>
        <taxon>Viridiplantae</taxon>
        <taxon>Streptophyta</taxon>
        <taxon>Embryophyta</taxon>
        <taxon>Tracheophyta</taxon>
        <taxon>Spermatophyta</taxon>
        <taxon>Magnoliopsida</taxon>
        <taxon>eudicotyledons</taxon>
        <taxon>Gunneridae</taxon>
        <taxon>Pentapetalae</taxon>
        <taxon>rosids</taxon>
        <taxon>malvids</taxon>
        <taxon>Brassicales</taxon>
        <taxon>Brassicaceae</taxon>
        <taxon>Camelineae</taxon>
        <taxon>Arabidopsis</taxon>
    </lineage>
</organism>
<name>UPS4_ARATH</name>
<proteinExistence type="evidence at transcript level"/>
<feature type="chain" id="PRO_0000221648" description="Ureide permease 4">
    <location>
        <begin position="1"/>
        <end position="401"/>
    </location>
</feature>
<feature type="topological domain" description="Extracellular" evidence="2">
    <location>
        <begin position="1"/>
        <end position="10"/>
    </location>
</feature>
<feature type="transmembrane region" description="Helical" evidence="2">
    <location>
        <begin position="11"/>
        <end position="31"/>
    </location>
</feature>
<feature type="topological domain" description="Cytoplasmic" evidence="2">
    <location>
        <begin position="32"/>
        <end position="40"/>
    </location>
</feature>
<feature type="transmembrane region" description="Helical" evidence="2">
    <location>
        <begin position="41"/>
        <end position="61"/>
    </location>
</feature>
<feature type="topological domain" description="Extracellular" evidence="2">
    <location>
        <begin position="62"/>
        <end position="81"/>
    </location>
</feature>
<feature type="transmembrane region" description="Helical" evidence="2">
    <location>
        <begin position="82"/>
        <end position="102"/>
    </location>
</feature>
<feature type="topological domain" description="Cytoplasmic" evidence="2">
    <location>
        <begin position="103"/>
        <end position="104"/>
    </location>
</feature>
<feature type="transmembrane region" description="Helical" evidence="2">
    <location>
        <begin position="105"/>
        <end position="125"/>
    </location>
</feature>
<feature type="topological domain" description="Extracellular" evidence="2">
    <location>
        <begin position="126"/>
        <end position="141"/>
    </location>
</feature>
<feature type="transmembrane region" description="Helical" evidence="2">
    <location>
        <begin position="142"/>
        <end position="162"/>
    </location>
</feature>
<feature type="topological domain" description="Cytoplasmic" evidence="2">
    <location>
        <begin position="163"/>
        <end position="231"/>
    </location>
</feature>
<feature type="transmembrane region" description="Helical" evidence="2">
    <location>
        <begin position="232"/>
        <end position="252"/>
    </location>
</feature>
<feature type="topological domain" description="Extracellular" evidence="2">
    <location>
        <begin position="253"/>
        <end position="275"/>
    </location>
</feature>
<feature type="transmembrane region" description="Helical" evidence="2">
    <location>
        <begin position="276"/>
        <end position="296"/>
    </location>
</feature>
<feature type="topological domain" description="Cytoplasmic" evidence="2">
    <location>
        <begin position="297"/>
        <end position="318"/>
    </location>
</feature>
<feature type="transmembrane region" description="Helical" evidence="2">
    <location>
        <begin position="319"/>
        <end position="339"/>
    </location>
</feature>
<feature type="topological domain" description="Extracellular" evidence="2">
    <location>
        <begin position="340"/>
        <end position="344"/>
    </location>
</feature>
<feature type="transmembrane region" description="Helical" evidence="2">
    <location>
        <begin position="345"/>
        <end position="365"/>
    </location>
</feature>
<feature type="topological domain" description="Cytoplasmic" evidence="2">
    <location>
        <begin position="366"/>
        <end position="374"/>
    </location>
</feature>
<feature type="transmembrane region" description="Helical" evidence="2">
    <location>
        <begin position="375"/>
        <end position="395"/>
    </location>
</feature>
<feature type="topological domain" description="Extracellular" evidence="2">
    <location>
        <begin position="396"/>
        <end position="401"/>
    </location>
</feature>
<feature type="binding site" evidence="2">
    <location>
        <begin position="224"/>
        <end position="231"/>
    </location>
    <ligand>
        <name>ATP</name>
        <dbReference type="ChEBI" id="CHEBI:30616"/>
    </ligand>
</feature>
<feature type="splice variant" id="VSP_014322" description="In isoform 4." evidence="6">
    <original>G</original>
    <variation>GILPLVCDESKTYVSMVSCVSRLNFIG</variation>
    <location>
        <position position="126"/>
    </location>
</feature>
<feature type="splice variant" id="VSP_014323" description="In isoform 3 and isoform 4." evidence="5 6">
    <original>DLYSSI</original>
    <variation>YKAETN</variation>
    <location>
        <begin position="179"/>
        <end position="184"/>
    </location>
</feature>
<feature type="splice variant" id="VSP_014324" description="In isoform 3 and isoform 4." evidence="5 6">
    <location>
        <begin position="185"/>
        <end position="401"/>
    </location>
</feature>
<feature type="splice variant" id="VSP_014325" description="In isoform 2." evidence="6">
    <original>FGK</original>
    <variation>QLQ</variation>
    <location>
        <begin position="228"/>
        <end position="230"/>
    </location>
</feature>
<feature type="splice variant" id="VSP_014326" description="In isoform 2." evidence="6">
    <location>
        <begin position="231"/>
        <end position="401"/>
    </location>
</feature>
<sequence length="401" mass="43203">MYVVESKAGAIGCMILSLCCLGSWPAILTLLERRGRLPQHTFLDFATANLLAAIVIAFSLGEIGKSTFLKPDFTTQLPQDNWPSVLLAVAGGVLLSIGNLATQYAFAFVGLSVTEVITASITVVIGTTLNYFLDNKINKAEILFPGVGCFLIAVFLGAAVHASNAADVKEKLKSLPSEDLYSSIENGEDKPEIEKTDVESQEKLAEKAKAGTAGFYVELENKRAIKVFGKSIMIGLFITLFAGISLSLFSPAFNLATNDQWSTLPKGVPKLVVYTAFFYFSIAGFLISLILNLIFLYRPMVGLARSSLKKYIYDSKGRGWAVFAGFLCGFGNGLQFMGGQAAGYAAADSVQALPLVSTFWGIVLFGEYRKSSKRTYALLVSMLAMFVAAVAILMASSGHRK</sequence>
<keyword id="KW-0025">Alternative splicing</keyword>
<keyword id="KW-0067">ATP-binding</keyword>
<keyword id="KW-0472">Membrane</keyword>
<keyword id="KW-0547">Nucleotide-binding</keyword>
<keyword id="KW-1185">Reference proteome</keyword>
<keyword id="KW-0812">Transmembrane</keyword>
<keyword id="KW-1133">Transmembrane helix</keyword>
<keyword id="KW-0813">Transport</keyword>
<gene>
    <name evidence="4" type="primary">UPS4</name>
    <name evidence="8" type="ordered locus">At2g03520</name>
    <name evidence="9" type="ORF">T4M8.4</name>
</gene>